<reference key="1">
    <citation type="journal article" date="1993" name="N. Z. J. Crop Hortic. Sci.">
        <title>Isolation and characterization of Asparagus officinalis L. cDNA clones encoding two forms of ubiquitin mRNA.</title>
        <authorList>
            <person name="Davies K.M."/>
            <person name="King G.A."/>
        </authorList>
    </citation>
    <scope>NUCLEOTIDE SEQUENCE [MRNA]</scope>
    <source>
        <strain>cv. Limbras 10</strain>
        <tissue>Spear</tissue>
    </source>
</reference>
<accession>P31753</accession>
<accession>O82079</accession>
<accession>P03993</accession>
<accession>P69308</accession>
<dbReference type="EMBL" id="X66875">
    <property type="protein sequence ID" value="CAA47346.1"/>
    <property type="molecule type" value="mRNA"/>
</dbReference>
<dbReference type="PIR" id="S25001">
    <property type="entry name" value="S25001"/>
</dbReference>
<dbReference type="SMR" id="P31753"/>
<dbReference type="GO" id="GO:0005737">
    <property type="term" value="C:cytoplasm"/>
    <property type="evidence" value="ECO:0007669"/>
    <property type="project" value="UniProtKB-SubCell"/>
</dbReference>
<dbReference type="GO" id="GO:0005634">
    <property type="term" value="C:nucleus"/>
    <property type="evidence" value="ECO:0007669"/>
    <property type="project" value="UniProtKB-SubCell"/>
</dbReference>
<dbReference type="GO" id="GO:1990904">
    <property type="term" value="C:ribonucleoprotein complex"/>
    <property type="evidence" value="ECO:0007669"/>
    <property type="project" value="UniProtKB-KW"/>
</dbReference>
<dbReference type="GO" id="GO:0005840">
    <property type="term" value="C:ribosome"/>
    <property type="evidence" value="ECO:0007669"/>
    <property type="project" value="UniProtKB-KW"/>
</dbReference>
<dbReference type="GO" id="GO:0003729">
    <property type="term" value="F:mRNA binding"/>
    <property type="evidence" value="ECO:0007669"/>
    <property type="project" value="UniProtKB-ARBA"/>
</dbReference>
<dbReference type="GO" id="GO:0003735">
    <property type="term" value="F:structural constituent of ribosome"/>
    <property type="evidence" value="ECO:0007669"/>
    <property type="project" value="InterPro"/>
</dbReference>
<dbReference type="GO" id="GO:0008270">
    <property type="term" value="F:zinc ion binding"/>
    <property type="evidence" value="ECO:0007669"/>
    <property type="project" value="UniProtKB-KW"/>
</dbReference>
<dbReference type="GO" id="GO:0006412">
    <property type="term" value="P:translation"/>
    <property type="evidence" value="ECO:0007669"/>
    <property type="project" value="InterPro"/>
</dbReference>
<dbReference type="Gene3D" id="6.20.50.150">
    <property type="match status" value="1"/>
</dbReference>
<dbReference type="Gene3D" id="3.10.20.90">
    <property type="entry name" value="Phosphatidylinositol 3-kinase Catalytic Subunit, Chain A, domain 1"/>
    <property type="match status" value="1"/>
</dbReference>
<dbReference type="InterPro" id="IPR002906">
    <property type="entry name" value="Ribosomal_eS31"/>
</dbReference>
<dbReference type="InterPro" id="IPR038582">
    <property type="entry name" value="Ribosomal_eS31_euk-type_sf"/>
</dbReference>
<dbReference type="InterPro" id="IPR011332">
    <property type="entry name" value="Ribosomal_zn-bd"/>
</dbReference>
<dbReference type="InterPro" id="IPR000626">
    <property type="entry name" value="Ubiquitin-like_dom"/>
</dbReference>
<dbReference type="InterPro" id="IPR029071">
    <property type="entry name" value="Ubiquitin-like_domsf"/>
</dbReference>
<dbReference type="InterPro" id="IPR050158">
    <property type="entry name" value="Ubiquitin_ubiquitin-like"/>
</dbReference>
<dbReference type="PANTHER" id="PTHR10666">
    <property type="entry name" value="UBIQUITIN"/>
    <property type="match status" value="1"/>
</dbReference>
<dbReference type="Pfam" id="PF01599">
    <property type="entry name" value="Ribosomal_S27"/>
    <property type="match status" value="1"/>
</dbReference>
<dbReference type="Pfam" id="PF00240">
    <property type="entry name" value="ubiquitin"/>
    <property type="match status" value="1"/>
</dbReference>
<dbReference type="SMART" id="SM01402">
    <property type="entry name" value="Ribosomal_S27"/>
    <property type="match status" value="1"/>
</dbReference>
<dbReference type="SUPFAM" id="SSF54236">
    <property type="entry name" value="Ubiquitin-like"/>
    <property type="match status" value="1"/>
</dbReference>
<dbReference type="SUPFAM" id="SSF57829">
    <property type="entry name" value="Zn-binding ribosomal proteins"/>
    <property type="match status" value="1"/>
</dbReference>
<dbReference type="PROSITE" id="PS50053">
    <property type="entry name" value="UBIQUITIN_2"/>
    <property type="match status" value="1"/>
</dbReference>
<proteinExistence type="evidence at transcript level"/>
<protein>
    <recommendedName>
        <fullName evidence="3">Ubiquitin-ribosomal protein eS31 fusion protein</fullName>
    </recommendedName>
    <component>
        <recommendedName>
            <fullName>Ubiquitin</fullName>
        </recommendedName>
    </component>
    <component>
        <recommendedName>
            <fullName evidence="3">Small ribosomal subunit protein eS31</fullName>
        </recommendedName>
        <alternativeName>
            <fullName>40S ribosomal protein S27a</fullName>
        </alternativeName>
    </component>
</protein>
<keyword id="KW-0963">Cytoplasm</keyword>
<keyword id="KW-1017">Isopeptide bond</keyword>
<keyword id="KW-0479">Metal-binding</keyword>
<keyword id="KW-0539">Nucleus</keyword>
<keyword id="KW-0687">Ribonucleoprotein</keyword>
<keyword id="KW-0689">Ribosomal protein</keyword>
<keyword id="KW-0832">Ubl conjugation</keyword>
<keyword id="KW-0862">Zinc</keyword>
<keyword id="KW-0863">Zinc-finger</keyword>
<comment type="function">
    <molecule>Ubiquitin</molecule>
    <text evidence="1">Exists either covalently attached to another protein, or free (unanchored). When covalently bound, it is conjugated to target proteins via an isopeptide bond either as a monomer (monoubiquitin), a polymer linked via different Lys residues of the ubiquitin (polyubiquitin chains) or a linear polymer linked via the initiator Met of the ubiquitin (linear polyubiquitin chains). Polyubiquitin chains, when attached to a target protein, have different functions depending on the Lys residue of the ubiquitin that is linked: Lys-6-linked may be involved in DNA repair; Lys-11-linked is involved in ERAD (endoplasmic reticulum-associated degradation) and in cell-cycle regulation; Lys-29-linked is involved in lysosomal degradation; Lys-33-linked is involved in kinase modification; Lys-48-linked is involved in protein degradation via the proteasome; Lys-63-linked is involved in endocytosis, DNA-damage responses as well as in signaling processes leading to activation of the transcription factor NF-kappa-B. Linear polymer chains formed via attachment by the initiator Met lead to cell signaling. Ubiquitin is usually conjugated to Lys residues of target proteins, however, in rare cases, conjugation to Cys or Ser residues has been observed. When polyubiquitin is free (unanchored-polyubiquitin), it also has distinct roles, such as in activation of protein kinases, and in signaling (By similarity).</text>
</comment>
<comment type="function">
    <molecule>Small ribosomal subunit protein eS31</molecule>
    <text>Component of the 40S subunit of the ribosome.</text>
</comment>
<comment type="subunit">
    <molecule>Small ribosomal subunit protein eS31</molecule>
    <text evidence="1">Part of the 40S ribosomal subunit.</text>
</comment>
<comment type="subcellular location">
    <molecule>Ubiquitin</molecule>
    <subcellularLocation>
        <location evidence="1">Cytoplasm</location>
    </subcellularLocation>
    <subcellularLocation>
        <location evidence="1">Nucleus</location>
    </subcellularLocation>
</comment>
<comment type="miscellaneous">
    <text>Ubiquitin is generally synthesized as a polyubiquitin precursor with tandem head to tail repeats. Often, there are one to three additional amino acids after the last repeat, removed in the mature protein. Alternatively, ubiquitin extension protein is synthesized as a single copy of ubiquitin fused to a ribosomal protein (either eL40 or eS31) or to an ubiquitin-related protein (either RUB1 or RUB2). Following translation, extension protein is cleaved from ubiquitin.</text>
</comment>
<comment type="similarity">
    <text evidence="3">In the N-terminal section; belongs to the ubiquitin family.</text>
</comment>
<comment type="similarity">
    <text evidence="3">In the C-terminal section; belongs to the eukaryotic ribosomal protein eS31 family.</text>
</comment>
<sequence>PPDQQRLIFAGKQLEDGRTLADYNIQKESTLHLVLRLRGGAKKRKKKTYTKPKKIKHKKKKVKLAVLQFYKVDDTGKVIRLRKECPNAECGAGTFMANHKDRHYCGKCGLTYVYQKGE</sequence>
<evidence type="ECO:0000250" key="1"/>
<evidence type="ECO:0000255" key="2">
    <source>
        <dbReference type="PROSITE-ProRule" id="PRU00214"/>
    </source>
</evidence>
<evidence type="ECO:0000305" key="3"/>
<feature type="chain" id="PRO_0000114833" description="Ubiquitin">
    <location>
        <begin position="1" status="less than"/>
        <end position="40"/>
    </location>
</feature>
<feature type="chain" id="PRO_0000137677" description="Small ribosomal subunit protein eS31">
    <location>
        <begin position="41"/>
        <end position="118"/>
    </location>
</feature>
<feature type="domain" description="Ubiquitin-like" evidence="2">
    <location>
        <begin position="1" status="less than"/>
        <end position="40"/>
    </location>
</feature>
<feature type="zinc finger region" description="C4-type">
    <location>
        <begin position="85"/>
        <end position="108"/>
    </location>
</feature>
<feature type="cross-link" description="Glycyl lysine isopeptide (Lys-Gly) (interchain with G-Cter in ubiquitin)" evidence="1">
    <location>
        <position position="12"/>
    </location>
</feature>
<feature type="cross-link" description="Glycyl lysine isopeptide (Gly-Lys) (interchain with K-? in acceptor proteins)" evidence="2">
    <location>
        <position position="40"/>
    </location>
</feature>
<feature type="non-terminal residue">
    <location>
        <position position="1"/>
    </location>
</feature>
<name>RS27A_ASPOF</name>
<organism>
    <name type="scientific">Asparagus officinalis</name>
    <name type="common">Garden asparagus</name>
    <dbReference type="NCBI Taxonomy" id="4686"/>
    <lineage>
        <taxon>Eukaryota</taxon>
        <taxon>Viridiplantae</taxon>
        <taxon>Streptophyta</taxon>
        <taxon>Embryophyta</taxon>
        <taxon>Tracheophyta</taxon>
        <taxon>Spermatophyta</taxon>
        <taxon>Magnoliopsida</taxon>
        <taxon>Liliopsida</taxon>
        <taxon>Asparagales</taxon>
        <taxon>Asparagaceae</taxon>
        <taxon>Asparagoideae</taxon>
        <taxon>Asparagus</taxon>
    </lineage>
</organism>